<feature type="chain" id="PRO_0000155467" description="Ribosomal RNA large subunit methyltransferase E">
    <location>
        <begin position="1"/>
        <end position="247"/>
    </location>
</feature>
<feature type="region of interest" description="Disordered" evidence="2">
    <location>
        <begin position="1"/>
        <end position="21"/>
    </location>
</feature>
<feature type="active site" description="Proton acceptor" evidence="1">
    <location>
        <position position="191"/>
    </location>
</feature>
<feature type="binding site" evidence="1">
    <location>
        <position position="88"/>
    </location>
    <ligand>
        <name>S-adenosyl-L-methionine</name>
        <dbReference type="ChEBI" id="CHEBI:59789"/>
    </ligand>
</feature>
<feature type="binding site" evidence="1">
    <location>
        <position position="90"/>
    </location>
    <ligand>
        <name>S-adenosyl-L-methionine</name>
        <dbReference type="ChEBI" id="CHEBI:59789"/>
    </ligand>
</feature>
<feature type="binding site" evidence="1">
    <location>
        <position position="111"/>
    </location>
    <ligand>
        <name>S-adenosyl-L-methionine</name>
        <dbReference type="ChEBI" id="CHEBI:59789"/>
    </ligand>
</feature>
<feature type="binding site" evidence="1">
    <location>
        <position position="127"/>
    </location>
    <ligand>
        <name>S-adenosyl-L-methionine</name>
        <dbReference type="ChEBI" id="CHEBI:59789"/>
    </ligand>
</feature>
<feature type="binding site" evidence="1">
    <location>
        <position position="151"/>
    </location>
    <ligand>
        <name>S-adenosyl-L-methionine</name>
        <dbReference type="ChEBI" id="CHEBI:59789"/>
    </ligand>
</feature>
<gene>
    <name evidence="1" type="primary">rlmE</name>
    <name evidence="1" type="synonym">ftsJ</name>
    <name evidence="1" type="synonym">rrmJ</name>
    <name type="ordered locus">BH01550</name>
</gene>
<proteinExistence type="inferred from homology"/>
<dbReference type="EC" id="2.1.1.166" evidence="1"/>
<dbReference type="EMBL" id="BX897699">
    <property type="protein sequence ID" value="CAF26967.1"/>
    <property type="molecule type" value="Genomic_DNA"/>
</dbReference>
<dbReference type="RefSeq" id="WP_011180108.1">
    <property type="nucleotide sequence ID" value="NZ_LRIJ02000001.1"/>
</dbReference>
<dbReference type="SMR" id="Q6G4Z3"/>
<dbReference type="PaxDb" id="283166-BH01550"/>
<dbReference type="EnsemblBacteria" id="CAF26967">
    <property type="protein sequence ID" value="CAF26967"/>
    <property type="gene ID" value="BH01550"/>
</dbReference>
<dbReference type="KEGG" id="bhe:BH01550"/>
<dbReference type="eggNOG" id="COG0293">
    <property type="taxonomic scope" value="Bacteria"/>
</dbReference>
<dbReference type="OrthoDB" id="9790080at2"/>
<dbReference type="Proteomes" id="UP000000421">
    <property type="component" value="Chromosome"/>
</dbReference>
<dbReference type="GO" id="GO:0005737">
    <property type="term" value="C:cytoplasm"/>
    <property type="evidence" value="ECO:0007669"/>
    <property type="project" value="UniProtKB-SubCell"/>
</dbReference>
<dbReference type="GO" id="GO:0008650">
    <property type="term" value="F:rRNA (uridine-2'-O-)-methyltransferase activity"/>
    <property type="evidence" value="ECO:0007669"/>
    <property type="project" value="UniProtKB-UniRule"/>
</dbReference>
<dbReference type="Gene3D" id="3.40.50.150">
    <property type="entry name" value="Vaccinia Virus protein VP39"/>
    <property type="match status" value="1"/>
</dbReference>
<dbReference type="HAMAP" id="MF_01547">
    <property type="entry name" value="RNA_methyltr_E"/>
    <property type="match status" value="1"/>
</dbReference>
<dbReference type="InterPro" id="IPR050082">
    <property type="entry name" value="RNA_methyltr_RlmE"/>
</dbReference>
<dbReference type="InterPro" id="IPR002877">
    <property type="entry name" value="RNA_MeTrfase_FtsJ_dom"/>
</dbReference>
<dbReference type="InterPro" id="IPR015507">
    <property type="entry name" value="rRNA-MeTfrase_E"/>
</dbReference>
<dbReference type="InterPro" id="IPR029063">
    <property type="entry name" value="SAM-dependent_MTases_sf"/>
</dbReference>
<dbReference type="PANTHER" id="PTHR10920">
    <property type="entry name" value="RIBOSOMAL RNA METHYLTRANSFERASE"/>
    <property type="match status" value="1"/>
</dbReference>
<dbReference type="PANTHER" id="PTHR10920:SF18">
    <property type="entry name" value="RRNA METHYLTRANSFERASE 2, MITOCHONDRIAL"/>
    <property type="match status" value="1"/>
</dbReference>
<dbReference type="Pfam" id="PF01728">
    <property type="entry name" value="FtsJ"/>
    <property type="match status" value="1"/>
</dbReference>
<dbReference type="PIRSF" id="PIRSF005461">
    <property type="entry name" value="23S_rRNA_mtase"/>
    <property type="match status" value="1"/>
</dbReference>
<dbReference type="SUPFAM" id="SSF53335">
    <property type="entry name" value="S-adenosyl-L-methionine-dependent methyltransferases"/>
    <property type="match status" value="1"/>
</dbReference>
<name>RLME_BARHE</name>
<keyword id="KW-0963">Cytoplasm</keyword>
<keyword id="KW-0489">Methyltransferase</keyword>
<keyword id="KW-0698">rRNA processing</keyword>
<keyword id="KW-0949">S-adenosyl-L-methionine</keyword>
<keyword id="KW-0808">Transferase</keyword>
<organism>
    <name type="scientific">Bartonella henselae (strain ATCC 49882 / DSM 28221 / CCUG 30454 / Houston 1)</name>
    <name type="common">Rochalimaea henselae</name>
    <dbReference type="NCBI Taxonomy" id="283166"/>
    <lineage>
        <taxon>Bacteria</taxon>
        <taxon>Pseudomonadati</taxon>
        <taxon>Pseudomonadota</taxon>
        <taxon>Alphaproteobacteria</taxon>
        <taxon>Hyphomicrobiales</taxon>
        <taxon>Bartonellaceae</taxon>
        <taxon>Bartonella</taxon>
    </lineage>
</organism>
<protein>
    <recommendedName>
        <fullName evidence="1">Ribosomal RNA large subunit methyltransferase E</fullName>
        <ecNumber evidence="1">2.1.1.166</ecNumber>
    </recommendedName>
    <alternativeName>
        <fullName evidence="1">23S rRNA Um2552 methyltransferase</fullName>
    </alternativeName>
    <alternativeName>
        <fullName evidence="1">rRNA (uridine-2'-O-)-methyltransferase</fullName>
    </alternativeName>
</protein>
<reference key="1">
    <citation type="journal article" date="2004" name="Proc. Natl. Acad. Sci. U.S.A.">
        <title>The louse-borne human pathogen Bartonella quintana is a genomic derivative of the zoonotic agent Bartonella henselae.</title>
        <authorList>
            <person name="Alsmark U.C.M."/>
            <person name="Frank A.C."/>
            <person name="Karlberg E.O."/>
            <person name="Legault B.-A."/>
            <person name="Ardell D.H."/>
            <person name="Canbaeck B."/>
            <person name="Eriksson A.-S."/>
            <person name="Naeslund A.K."/>
            <person name="Handley S.A."/>
            <person name="Huvet M."/>
            <person name="La Scola B."/>
            <person name="Holmberg M."/>
            <person name="Andersson S.G.E."/>
        </authorList>
    </citation>
    <scope>NUCLEOTIDE SEQUENCE [LARGE SCALE GENOMIC DNA]</scope>
    <source>
        <strain>ATCC 49882 / DSM 28221 / CCUG 30454 / Houston 1</strain>
    </source>
</reference>
<accession>Q6G4Z3</accession>
<sequence length="247" mass="27323">MKKTTKKTAGGYGGSGSHKLYQRVKKKAGTITASSRRWLERHLNDPYVHQSKVDGYRSRAAYKLIEINQRYKFLKKGQKIIDLGAAPGGWCQVSGCIVGSSDEKPSVVGIDYLHVDPLPGVVMLEMDFLHSDAPQKLIDALGTKPDVVLSDMAAPTTGHRQTDHLRTIYLCEVAADFALSVLKPGGHFLAKAFQGGAENTLLTTLKQNFKTVHHVKPPASRSESVELYLLALEFKAKTERKEQLFLF</sequence>
<comment type="function">
    <text evidence="1">Specifically methylates the uridine in position 2552 of 23S rRNA at the 2'-O position of the ribose in the fully assembled 50S ribosomal subunit.</text>
</comment>
<comment type="catalytic activity">
    <reaction evidence="1">
        <text>uridine(2552) in 23S rRNA + S-adenosyl-L-methionine = 2'-O-methyluridine(2552) in 23S rRNA + S-adenosyl-L-homocysteine + H(+)</text>
        <dbReference type="Rhea" id="RHEA:42720"/>
        <dbReference type="Rhea" id="RHEA-COMP:10202"/>
        <dbReference type="Rhea" id="RHEA-COMP:10203"/>
        <dbReference type="ChEBI" id="CHEBI:15378"/>
        <dbReference type="ChEBI" id="CHEBI:57856"/>
        <dbReference type="ChEBI" id="CHEBI:59789"/>
        <dbReference type="ChEBI" id="CHEBI:65315"/>
        <dbReference type="ChEBI" id="CHEBI:74478"/>
        <dbReference type="EC" id="2.1.1.166"/>
    </reaction>
</comment>
<comment type="subcellular location">
    <subcellularLocation>
        <location evidence="1">Cytoplasm</location>
    </subcellularLocation>
</comment>
<comment type="similarity">
    <text evidence="1">Belongs to the class I-like SAM-binding methyltransferase superfamily. RNA methyltransferase RlmE family.</text>
</comment>
<evidence type="ECO:0000255" key="1">
    <source>
        <dbReference type="HAMAP-Rule" id="MF_01547"/>
    </source>
</evidence>
<evidence type="ECO:0000256" key="2">
    <source>
        <dbReference type="SAM" id="MobiDB-lite"/>
    </source>
</evidence>